<dbReference type="EC" id="2.3.3.13" evidence="1"/>
<dbReference type="EMBL" id="CP000127">
    <property type="protein sequence ID" value="ABA58969.1"/>
    <property type="molecule type" value="Genomic_DNA"/>
</dbReference>
<dbReference type="RefSeq" id="WP_004269192.1">
    <property type="nucleotide sequence ID" value="NC_007484.1"/>
</dbReference>
<dbReference type="SMR" id="Q3J877"/>
<dbReference type="FunCoup" id="Q3J877">
    <property type="interactions" value="503"/>
</dbReference>
<dbReference type="STRING" id="323261.Noc_2516"/>
<dbReference type="KEGG" id="noc:Noc_2516"/>
<dbReference type="eggNOG" id="COG0119">
    <property type="taxonomic scope" value="Bacteria"/>
</dbReference>
<dbReference type="HOGENOM" id="CLU_022158_0_1_6"/>
<dbReference type="InParanoid" id="Q3J877"/>
<dbReference type="UniPathway" id="UPA00048">
    <property type="reaction ID" value="UER00070"/>
</dbReference>
<dbReference type="Proteomes" id="UP000006838">
    <property type="component" value="Chromosome"/>
</dbReference>
<dbReference type="GO" id="GO:0005829">
    <property type="term" value="C:cytosol"/>
    <property type="evidence" value="ECO:0007669"/>
    <property type="project" value="TreeGrafter"/>
</dbReference>
<dbReference type="GO" id="GO:0003852">
    <property type="term" value="F:2-isopropylmalate synthase activity"/>
    <property type="evidence" value="ECO:0007669"/>
    <property type="project" value="UniProtKB-UniRule"/>
</dbReference>
<dbReference type="GO" id="GO:0003985">
    <property type="term" value="F:acetyl-CoA C-acetyltransferase activity"/>
    <property type="evidence" value="ECO:0007669"/>
    <property type="project" value="UniProtKB-UniRule"/>
</dbReference>
<dbReference type="GO" id="GO:0030145">
    <property type="term" value="F:manganese ion binding"/>
    <property type="evidence" value="ECO:0007669"/>
    <property type="project" value="UniProtKB-UniRule"/>
</dbReference>
<dbReference type="GO" id="GO:0009098">
    <property type="term" value="P:L-leucine biosynthetic process"/>
    <property type="evidence" value="ECO:0007669"/>
    <property type="project" value="UniProtKB-UniRule"/>
</dbReference>
<dbReference type="CDD" id="cd07940">
    <property type="entry name" value="DRE_TIM_IPMS"/>
    <property type="match status" value="1"/>
</dbReference>
<dbReference type="FunFam" id="1.10.238.260:FF:000001">
    <property type="entry name" value="2-isopropylmalate synthase"/>
    <property type="match status" value="1"/>
</dbReference>
<dbReference type="FunFam" id="3.20.20.70:FF:000010">
    <property type="entry name" value="2-isopropylmalate synthase"/>
    <property type="match status" value="1"/>
</dbReference>
<dbReference type="FunFam" id="3.30.160.270:FF:000003">
    <property type="entry name" value="2-isopropylmalate synthase"/>
    <property type="match status" value="1"/>
</dbReference>
<dbReference type="Gene3D" id="1.10.238.260">
    <property type="match status" value="1"/>
</dbReference>
<dbReference type="Gene3D" id="3.30.160.270">
    <property type="match status" value="1"/>
</dbReference>
<dbReference type="Gene3D" id="3.20.20.70">
    <property type="entry name" value="Aldolase class I"/>
    <property type="match status" value="1"/>
</dbReference>
<dbReference type="HAMAP" id="MF_01025">
    <property type="entry name" value="LeuA_type1"/>
    <property type="match status" value="1"/>
</dbReference>
<dbReference type="InterPro" id="IPR050073">
    <property type="entry name" value="2-IPM_HCS-like"/>
</dbReference>
<dbReference type="InterPro" id="IPR013709">
    <property type="entry name" value="2-isopropylmalate_synth_dimer"/>
</dbReference>
<dbReference type="InterPro" id="IPR002034">
    <property type="entry name" value="AIPM/Hcit_synth_CS"/>
</dbReference>
<dbReference type="InterPro" id="IPR013785">
    <property type="entry name" value="Aldolase_TIM"/>
</dbReference>
<dbReference type="InterPro" id="IPR054691">
    <property type="entry name" value="LeuA/HCS_post-cat"/>
</dbReference>
<dbReference type="InterPro" id="IPR036230">
    <property type="entry name" value="LeuA_allosteric_dom_sf"/>
</dbReference>
<dbReference type="InterPro" id="IPR005671">
    <property type="entry name" value="LeuA_bact_synth"/>
</dbReference>
<dbReference type="InterPro" id="IPR000891">
    <property type="entry name" value="PYR_CT"/>
</dbReference>
<dbReference type="NCBIfam" id="TIGR00973">
    <property type="entry name" value="leuA_bact"/>
    <property type="match status" value="1"/>
</dbReference>
<dbReference type="NCBIfam" id="NF002086">
    <property type="entry name" value="PRK00915.1-3"/>
    <property type="match status" value="1"/>
</dbReference>
<dbReference type="NCBIfam" id="NF002087">
    <property type="entry name" value="PRK00915.1-4"/>
    <property type="match status" value="1"/>
</dbReference>
<dbReference type="PANTHER" id="PTHR10277:SF9">
    <property type="entry name" value="2-ISOPROPYLMALATE SYNTHASE 1, CHLOROPLASTIC-RELATED"/>
    <property type="match status" value="1"/>
</dbReference>
<dbReference type="PANTHER" id="PTHR10277">
    <property type="entry name" value="HOMOCITRATE SYNTHASE-RELATED"/>
    <property type="match status" value="1"/>
</dbReference>
<dbReference type="Pfam" id="PF22617">
    <property type="entry name" value="HCS_D2"/>
    <property type="match status" value="1"/>
</dbReference>
<dbReference type="Pfam" id="PF00682">
    <property type="entry name" value="HMGL-like"/>
    <property type="match status" value="1"/>
</dbReference>
<dbReference type="Pfam" id="PF08502">
    <property type="entry name" value="LeuA_dimer"/>
    <property type="match status" value="1"/>
</dbReference>
<dbReference type="SMART" id="SM00917">
    <property type="entry name" value="LeuA_dimer"/>
    <property type="match status" value="1"/>
</dbReference>
<dbReference type="SUPFAM" id="SSF110921">
    <property type="entry name" value="2-isopropylmalate synthase LeuA, allosteric (dimerisation) domain"/>
    <property type="match status" value="1"/>
</dbReference>
<dbReference type="SUPFAM" id="SSF51569">
    <property type="entry name" value="Aldolase"/>
    <property type="match status" value="1"/>
</dbReference>
<dbReference type="PROSITE" id="PS00815">
    <property type="entry name" value="AIPM_HOMOCIT_SYNTH_1"/>
    <property type="match status" value="1"/>
</dbReference>
<dbReference type="PROSITE" id="PS00816">
    <property type="entry name" value="AIPM_HOMOCIT_SYNTH_2"/>
    <property type="match status" value="1"/>
</dbReference>
<dbReference type="PROSITE" id="PS50991">
    <property type="entry name" value="PYR_CT"/>
    <property type="match status" value="1"/>
</dbReference>
<feature type="chain" id="PRO_1000149230" description="2-isopropylmalate synthase">
    <location>
        <begin position="1"/>
        <end position="511"/>
    </location>
</feature>
<feature type="domain" description="Pyruvate carboxyltransferase" evidence="1">
    <location>
        <begin position="5"/>
        <end position="267"/>
    </location>
</feature>
<feature type="region of interest" description="Regulatory domain" evidence="1">
    <location>
        <begin position="393"/>
        <end position="511"/>
    </location>
</feature>
<feature type="binding site" evidence="1">
    <location>
        <position position="14"/>
    </location>
    <ligand>
        <name>Mn(2+)</name>
        <dbReference type="ChEBI" id="CHEBI:29035"/>
    </ligand>
</feature>
<feature type="binding site" evidence="1">
    <location>
        <position position="202"/>
    </location>
    <ligand>
        <name>Mn(2+)</name>
        <dbReference type="ChEBI" id="CHEBI:29035"/>
    </ligand>
</feature>
<feature type="binding site" evidence="1">
    <location>
        <position position="204"/>
    </location>
    <ligand>
        <name>Mn(2+)</name>
        <dbReference type="ChEBI" id="CHEBI:29035"/>
    </ligand>
</feature>
<feature type="binding site" evidence="1">
    <location>
        <position position="238"/>
    </location>
    <ligand>
        <name>Mn(2+)</name>
        <dbReference type="ChEBI" id="CHEBI:29035"/>
    </ligand>
</feature>
<keyword id="KW-0028">Amino-acid biosynthesis</keyword>
<keyword id="KW-0100">Branched-chain amino acid biosynthesis</keyword>
<keyword id="KW-0963">Cytoplasm</keyword>
<keyword id="KW-0432">Leucine biosynthesis</keyword>
<keyword id="KW-0464">Manganese</keyword>
<keyword id="KW-0479">Metal-binding</keyword>
<keyword id="KW-1185">Reference proteome</keyword>
<keyword id="KW-0808">Transferase</keyword>
<gene>
    <name evidence="1" type="primary">leuA</name>
    <name type="ordered locus">Noc_2516</name>
</gene>
<reference key="1">
    <citation type="journal article" date="2006" name="Appl. Environ. Microbiol.">
        <title>Complete genome sequence of the marine, chemolithoautotrophic, ammonia-oxidizing bacterium Nitrosococcus oceani ATCC 19707.</title>
        <authorList>
            <person name="Klotz M.G."/>
            <person name="Arp D.J."/>
            <person name="Chain P.S.G."/>
            <person name="El-Sheikh A.F."/>
            <person name="Hauser L.J."/>
            <person name="Hommes N.G."/>
            <person name="Larimer F.W."/>
            <person name="Malfatti S.A."/>
            <person name="Norton J.M."/>
            <person name="Poret-Peterson A.T."/>
            <person name="Vergez L.M."/>
            <person name="Ward B.B."/>
        </authorList>
    </citation>
    <scope>NUCLEOTIDE SEQUENCE [LARGE SCALE GENOMIC DNA]</scope>
    <source>
        <strain>ATCC 19707 / BCRC 17464 / JCM 30415 / NCIMB 11848 / C-107</strain>
    </source>
</reference>
<evidence type="ECO:0000255" key="1">
    <source>
        <dbReference type="HAMAP-Rule" id="MF_01025"/>
    </source>
</evidence>
<sequence length="511" mass="55581">MKDKLIVFDTTLRDGEQSPGASMTREEKVRIAKALERMRVDVIEAGFPVASQGDFEAVQAVARSVRESTVCGLARALGADIDRAGEALAEAESARIHTFIATSPIHMKRKLRMEPDQVLEHAVKAVKRAREYTDDVEFSPEDAGRSEIEFLCRILEAVIAAGARTVNIPDTVGYNLPEQFAQLIRTLRERVSNSDKAIFSVHCHNDLGMAVANSLAAVMSGARQVECTINGLGERAGNAALEEVVMAVRTRQDSFPCDTNVDISQIVPTSRLVSGITGFSVQPNKAIVGANAFAHASGIHQDGVLKERQTYEIMSAEDVGWHANQMILGKHSGRNAFRARLRELGIELETEEELNAAFQRFKELADKKHVIYDEDLQALVTDANLAAENERFKLSWLKVVSETGETAIASVTLSVDSIERQASAPGSGPVDAAYKAIDSILQSNTELLLYSVNSITSGTDAQGEVTVRLKKNGRIANGQGADTDIVMASAKAYVNALNKILYPVERAYPQV</sequence>
<protein>
    <recommendedName>
        <fullName evidence="1">2-isopropylmalate synthase</fullName>
        <ecNumber evidence="1">2.3.3.13</ecNumber>
    </recommendedName>
    <alternativeName>
        <fullName evidence="1">Alpha-IPM synthase</fullName>
    </alternativeName>
    <alternativeName>
        <fullName evidence="1">Alpha-isopropylmalate synthase</fullName>
    </alternativeName>
</protein>
<comment type="function">
    <text evidence="1">Catalyzes the condensation of the acetyl group of acetyl-CoA with 3-methyl-2-oxobutanoate (2-ketoisovalerate) to form 3-carboxy-3-hydroxy-4-methylpentanoate (2-isopropylmalate).</text>
</comment>
<comment type="catalytic activity">
    <reaction evidence="1">
        <text>3-methyl-2-oxobutanoate + acetyl-CoA + H2O = (2S)-2-isopropylmalate + CoA + H(+)</text>
        <dbReference type="Rhea" id="RHEA:21524"/>
        <dbReference type="ChEBI" id="CHEBI:1178"/>
        <dbReference type="ChEBI" id="CHEBI:11851"/>
        <dbReference type="ChEBI" id="CHEBI:15377"/>
        <dbReference type="ChEBI" id="CHEBI:15378"/>
        <dbReference type="ChEBI" id="CHEBI:57287"/>
        <dbReference type="ChEBI" id="CHEBI:57288"/>
        <dbReference type="EC" id="2.3.3.13"/>
    </reaction>
</comment>
<comment type="cofactor">
    <cofactor evidence="1">
        <name>Mn(2+)</name>
        <dbReference type="ChEBI" id="CHEBI:29035"/>
    </cofactor>
</comment>
<comment type="pathway">
    <text evidence="1">Amino-acid biosynthesis; L-leucine biosynthesis; L-leucine from 3-methyl-2-oxobutanoate: step 1/4.</text>
</comment>
<comment type="subunit">
    <text evidence="1">Homodimer.</text>
</comment>
<comment type="subcellular location">
    <subcellularLocation>
        <location evidence="1">Cytoplasm</location>
    </subcellularLocation>
</comment>
<comment type="similarity">
    <text evidence="1">Belongs to the alpha-IPM synthase/homocitrate synthase family. LeuA type 1 subfamily.</text>
</comment>
<organism>
    <name type="scientific">Nitrosococcus oceani (strain ATCC 19707 / BCRC 17464 / JCM 30415 / NCIMB 11848 / C-107)</name>
    <dbReference type="NCBI Taxonomy" id="323261"/>
    <lineage>
        <taxon>Bacteria</taxon>
        <taxon>Pseudomonadati</taxon>
        <taxon>Pseudomonadota</taxon>
        <taxon>Gammaproteobacteria</taxon>
        <taxon>Chromatiales</taxon>
        <taxon>Chromatiaceae</taxon>
        <taxon>Nitrosococcus</taxon>
    </lineage>
</organism>
<accession>Q3J877</accession>
<proteinExistence type="inferred from homology"/>
<name>LEU1_NITOC</name>